<organism>
    <name type="scientific">Homo sapiens</name>
    <name type="common">Human</name>
    <dbReference type="NCBI Taxonomy" id="9606"/>
    <lineage>
        <taxon>Eukaryota</taxon>
        <taxon>Metazoa</taxon>
        <taxon>Chordata</taxon>
        <taxon>Craniata</taxon>
        <taxon>Vertebrata</taxon>
        <taxon>Euteleostomi</taxon>
        <taxon>Mammalia</taxon>
        <taxon>Eutheria</taxon>
        <taxon>Euarchontoglires</taxon>
        <taxon>Primates</taxon>
        <taxon>Haplorrhini</taxon>
        <taxon>Catarrhini</taxon>
        <taxon>Hominidae</taxon>
        <taxon>Homo</taxon>
    </lineage>
</organism>
<name>O13A1_HUMAN</name>
<gene>
    <name type="primary">OR13A1</name>
</gene>
<reference key="1">
    <citation type="submission" date="2001-07" db="EMBL/GenBank/DDBJ databases">
        <title>Genome-wide discovery and analysis of human seven transmembrane helix receptor genes.</title>
        <authorList>
            <person name="Suwa M."/>
            <person name="Sato T."/>
            <person name="Okouchi I."/>
            <person name="Arita M."/>
            <person name="Futami K."/>
            <person name="Matsumoto S."/>
            <person name="Tsutsumi S."/>
            <person name="Aburatani H."/>
            <person name="Asai K."/>
            <person name="Akiyama Y."/>
        </authorList>
    </citation>
    <scope>NUCLEOTIDE SEQUENCE [GENOMIC DNA]</scope>
</reference>
<reference key="2">
    <citation type="journal article" date="2004" name="Nat. Genet.">
        <title>Complete sequencing and characterization of 21,243 full-length human cDNAs.</title>
        <authorList>
            <person name="Ota T."/>
            <person name="Suzuki Y."/>
            <person name="Nishikawa T."/>
            <person name="Otsuki T."/>
            <person name="Sugiyama T."/>
            <person name="Irie R."/>
            <person name="Wakamatsu A."/>
            <person name="Hayashi K."/>
            <person name="Sato H."/>
            <person name="Nagai K."/>
            <person name="Kimura K."/>
            <person name="Makita H."/>
            <person name="Sekine M."/>
            <person name="Obayashi M."/>
            <person name="Nishi T."/>
            <person name="Shibahara T."/>
            <person name="Tanaka T."/>
            <person name="Ishii S."/>
            <person name="Yamamoto J."/>
            <person name="Saito K."/>
            <person name="Kawai Y."/>
            <person name="Isono Y."/>
            <person name="Nakamura Y."/>
            <person name="Nagahari K."/>
            <person name="Murakami K."/>
            <person name="Yasuda T."/>
            <person name="Iwayanagi T."/>
            <person name="Wagatsuma M."/>
            <person name="Shiratori A."/>
            <person name="Sudo H."/>
            <person name="Hosoiri T."/>
            <person name="Kaku Y."/>
            <person name="Kodaira H."/>
            <person name="Kondo H."/>
            <person name="Sugawara M."/>
            <person name="Takahashi M."/>
            <person name="Kanda K."/>
            <person name="Yokoi T."/>
            <person name="Furuya T."/>
            <person name="Kikkawa E."/>
            <person name="Omura Y."/>
            <person name="Abe K."/>
            <person name="Kamihara K."/>
            <person name="Katsuta N."/>
            <person name="Sato K."/>
            <person name="Tanikawa M."/>
            <person name="Yamazaki M."/>
            <person name="Ninomiya K."/>
            <person name="Ishibashi T."/>
            <person name="Yamashita H."/>
            <person name="Murakawa K."/>
            <person name="Fujimori K."/>
            <person name="Tanai H."/>
            <person name="Kimata M."/>
            <person name="Watanabe M."/>
            <person name="Hiraoka S."/>
            <person name="Chiba Y."/>
            <person name="Ishida S."/>
            <person name="Ono Y."/>
            <person name="Takiguchi S."/>
            <person name="Watanabe S."/>
            <person name="Yosida M."/>
            <person name="Hotuta T."/>
            <person name="Kusano J."/>
            <person name="Kanehori K."/>
            <person name="Takahashi-Fujii A."/>
            <person name="Hara H."/>
            <person name="Tanase T.-O."/>
            <person name="Nomura Y."/>
            <person name="Togiya S."/>
            <person name="Komai F."/>
            <person name="Hara R."/>
            <person name="Takeuchi K."/>
            <person name="Arita M."/>
            <person name="Imose N."/>
            <person name="Musashino K."/>
            <person name="Yuuki H."/>
            <person name="Oshima A."/>
            <person name="Sasaki N."/>
            <person name="Aotsuka S."/>
            <person name="Yoshikawa Y."/>
            <person name="Matsunawa H."/>
            <person name="Ichihara T."/>
            <person name="Shiohata N."/>
            <person name="Sano S."/>
            <person name="Moriya S."/>
            <person name="Momiyama H."/>
            <person name="Satoh N."/>
            <person name="Takami S."/>
            <person name="Terashima Y."/>
            <person name="Suzuki O."/>
            <person name="Nakagawa S."/>
            <person name="Senoh A."/>
            <person name="Mizoguchi H."/>
            <person name="Goto Y."/>
            <person name="Shimizu F."/>
            <person name="Wakebe H."/>
            <person name="Hishigaki H."/>
            <person name="Watanabe T."/>
            <person name="Sugiyama A."/>
            <person name="Takemoto M."/>
            <person name="Kawakami B."/>
            <person name="Yamazaki M."/>
            <person name="Watanabe K."/>
            <person name="Kumagai A."/>
            <person name="Itakura S."/>
            <person name="Fukuzumi Y."/>
            <person name="Fujimori Y."/>
            <person name="Komiyama M."/>
            <person name="Tashiro H."/>
            <person name="Tanigami A."/>
            <person name="Fujiwara T."/>
            <person name="Ono T."/>
            <person name="Yamada K."/>
            <person name="Fujii Y."/>
            <person name="Ozaki K."/>
            <person name="Hirao M."/>
            <person name="Ohmori Y."/>
            <person name="Kawabata A."/>
            <person name="Hikiji T."/>
            <person name="Kobatake N."/>
            <person name="Inagaki H."/>
            <person name="Ikema Y."/>
            <person name="Okamoto S."/>
            <person name="Okitani R."/>
            <person name="Kawakami T."/>
            <person name="Noguchi S."/>
            <person name="Itoh T."/>
            <person name="Shigeta K."/>
            <person name="Senba T."/>
            <person name="Matsumura K."/>
            <person name="Nakajima Y."/>
            <person name="Mizuno T."/>
            <person name="Morinaga M."/>
            <person name="Sasaki M."/>
            <person name="Togashi T."/>
            <person name="Oyama M."/>
            <person name="Hata H."/>
            <person name="Watanabe M."/>
            <person name="Komatsu T."/>
            <person name="Mizushima-Sugano J."/>
            <person name="Satoh T."/>
            <person name="Shirai Y."/>
            <person name="Takahashi Y."/>
            <person name="Nakagawa K."/>
            <person name="Okumura K."/>
            <person name="Nagase T."/>
            <person name="Nomura N."/>
            <person name="Kikuchi H."/>
            <person name="Masuho Y."/>
            <person name="Yamashita R."/>
            <person name="Nakai K."/>
            <person name="Yada T."/>
            <person name="Nakamura Y."/>
            <person name="Ohara O."/>
            <person name="Isogai T."/>
            <person name="Sugano S."/>
        </authorList>
    </citation>
    <scope>NUCLEOTIDE SEQUENCE [LARGE SCALE MRNA]</scope>
    <source>
        <tissue>Testis</tissue>
    </source>
</reference>
<reference key="3">
    <citation type="journal article" date="2004" name="Nature">
        <title>The DNA sequence and comparative analysis of human chromosome 10.</title>
        <authorList>
            <person name="Deloukas P."/>
            <person name="Earthrowl M.E."/>
            <person name="Grafham D.V."/>
            <person name="Rubenfield M."/>
            <person name="French L."/>
            <person name="Steward C.A."/>
            <person name="Sims S.K."/>
            <person name="Jones M.C."/>
            <person name="Searle S."/>
            <person name="Scott C."/>
            <person name="Howe K."/>
            <person name="Hunt S.E."/>
            <person name="Andrews T.D."/>
            <person name="Gilbert J.G.R."/>
            <person name="Swarbreck D."/>
            <person name="Ashurst J.L."/>
            <person name="Taylor A."/>
            <person name="Battles J."/>
            <person name="Bird C.P."/>
            <person name="Ainscough R."/>
            <person name="Almeida J.P."/>
            <person name="Ashwell R.I.S."/>
            <person name="Ambrose K.D."/>
            <person name="Babbage A.K."/>
            <person name="Bagguley C.L."/>
            <person name="Bailey J."/>
            <person name="Banerjee R."/>
            <person name="Bates K."/>
            <person name="Beasley H."/>
            <person name="Bray-Allen S."/>
            <person name="Brown A.J."/>
            <person name="Brown J.Y."/>
            <person name="Burford D.C."/>
            <person name="Burrill W."/>
            <person name="Burton J."/>
            <person name="Cahill P."/>
            <person name="Camire D."/>
            <person name="Carter N.P."/>
            <person name="Chapman J.C."/>
            <person name="Clark S.Y."/>
            <person name="Clarke G."/>
            <person name="Clee C.M."/>
            <person name="Clegg S."/>
            <person name="Corby N."/>
            <person name="Coulson A."/>
            <person name="Dhami P."/>
            <person name="Dutta I."/>
            <person name="Dunn M."/>
            <person name="Faulkner L."/>
            <person name="Frankish A."/>
            <person name="Frankland J.A."/>
            <person name="Garner P."/>
            <person name="Garnett J."/>
            <person name="Gribble S."/>
            <person name="Griffiths C."/>
            <person name="Grocock R."/>
            <person name="Gustafson E."/>
            <person name="Hammond S."/>
            <person name="Harley J.L."/>
            <person name="Hart E."/>
            <person name="Heath P.D."/>
            <person name="Ho T.P."/>
            <person name="Hopkins B."/>
            <person name="Horne J."/>
            <person name="Howden P.J."/>
            <person name="Huckle E."/>
            <person name="Hynds C."/>
            <person name="Johnson C."/>
            <person name="Johnson D."/>
            <person name="Kana A."/>
            <person name="Kay M."/>
            <person name="Kimberley A.M."/>
            <person name="Kershaw J.K."/>
            <person name="Kokkinaki M."/>
            <person name="Laird G.K."/>
            <person name="Lawlor S."/>
            <person name="Lee H.M."/>
            <person name="Leongamornlert D.A."/>
            <person name="Laird G."/>
            <person name="Lloyd C."/>
            <person name="Lloyd D.M."/>
            <person name="Loveland J."/>
            <person name="Lovell J."/>
            <person name="McLaren S."/>
            <person name="McLay K.E."/>
            <person name="McMurray A."/>
            <person name="Mashreghi-Mohammadi M."/>
            <person name="Matthews L."/>
            <person name="Milne S."/>
            <person name="Nickerson T."/>
            <person name="Nguyen M."/>
            <person name="Overton-Larty E."/>
            <person name="Palmer S.A."/>
            <person name="Pearce A.V."/>
            <person name="Peck A.I."/>
            <person name="Pelan S."/>
            <person name="Phillimore B."/>
            <person name="Porter K."/>
            <person name="Rice C.M."/>
            <person name="Rogosin A."/>
            <person name="Ross M.T."/>
            <person name="Sarafidou T."/>
            <person name="Sehra H.K."/>
            <person name="Shownkeen R."/>
            <person name="Skuce C.D."/>
            <person name="Smith M."/>
            <person name="Standring L."/>
            <person name="Sycamore N."/>
            <person name="Tester J."/>
            <person name="Thorpe A."/>
            <person name="Torcasso W."/>
            <person name="Tracey A."/>
            <person name="Tromans A."/>
            <person name="Tsolas J."/>
            <person name="Wall M."/>
            <person name="Walsh J."/>
            <person name="Wang H."/>
            <person name="Weinstock K."/>
            <person name="West A.P."/>
            <person name="Willey D.L."/>
            <person name="Whitehead S.L."/>
            <person name="Wilming L."/>
            <person name="Wray P.W."/>
            <person name="Young L."/>
            <person name="Chen Y."/>
            <person name="Lovering R.C."/>
            <person name="Moschonas N.K."/>
            <person name="Siebert R."/>
            <person name="Fechtel K."/>
            <person name="Bentley D."/>
            <person name="Durbin R.M."/>
            <person name="Hubbard T."/>
            <person name="Doucette-Stamm L."/>
            <person name="Beck S."/>
            <person name="Smith D.R."/>
            <person name="Rogers J."/>
        </authorList>
    </citation>
    <scope>NUCLEOTIDE SEQUENCE [LARGE SCALE GENOMIC DNA]</scope>
</reference>
<reference key="4">
    <citation type="submission" date="2005-07" db="EMBL/GenBank/DDBJ databases">
        <authorList>
            <person name="Mural R.J."/>
            <person name="Istrail S."/>
            <person name="Sutton G.G."/>
            <person name="Florea L."/>
            <person name="Halpern A.L."/>
            <person name="Mobarry C.M."/>
            <person name="Lippert R."/>
            <person name="Walenz B."/>
            <person name="Shatkay H."/>
            <person name="Dew I."/>
            <person name="Miller J.R."/>
            <person name="Flanigan M.J."/>
            <person name="Edwards N.J."/>
            <person name="Bolanos R."/>
            <person name="Fasulo D."/>
            <person name="Halldorsson B.V."/>
            <person name="Hannenhalli S."/>
            <person name="Turner R."/>
            <person name="Yooseph S."/>
            <person name="Lu F."/>
            <person name="Nusskern D.R."/>
            <person name="Shue B.C."/>
            <person name="Zheng X.H."/>
            <person name="Zhong F."/>
            <person name="Delcher A.L."/>
            <person name="Huson D.H."/>
            <person name="Kravitz S.A."/>
            <person name="Mouchard L."/>
            <person name="Reinert K."/>
            <person name="Remington K.A."/>
            <person name="Clark A.G."/>
            <person name="Waterman M.S."/>
            <person name="Eichler E.E."/>
            <person name="Adams M.D."/>
            <person name="Hunkapiller M.W."/>
            <person name="Myers E.W."/>
            <person name="Venter J.C."/>
        </authorList>
    </citation>
    <scope>NUCLEOTIDE SEQUENCE [LARGE SCALE GENOMIC DNA]</scope>
</reference>
<reference key="5">
    <citation type="journal article" date="2004" name="Genome Res.">
        <title>The status, quality, and expansion of the NIH full-length cDNA project: the Mammalian Gene Collection (MGC).</title>
        <authorList>
            <consortium name="The MGC Project Team"/>
        </authorList>
    </citation>
    <scope>NUCLEOTIDE SEQUENCE [LARGE SCALE MRNA]</scope>
    <source>
        <tissue>Brain cortex</tissue>
    </source>
</reference>
<reference key="6">
    <citation type="journal article" date="2004" name="Proc. Natl. Acad. Sci. U.S.A.">
        <title>The human olfactory receptor gene family.</title>
        <authorList>
            <person name="Malnic B."/>
            <person name="Godfrey P.A."/>
            <person name="Buck L.B."/>
        </authorList>
    </citation>
    <scope>IDENTIFICATION</scope>
</reference>
<reference key="7">
    <citation type="journal article" date="2004" name="Proc. Natl. Acad. Sci. U.S.A.">
        <authorList>
            <person name="Malnic B."/>
            <person name="Godfrey P.A."/>
            <person name="Buck L.B."/>
        </authorList>
    </citation>
    <scope>ERRATUM OF PUBMED:14983052</scope>
</reference>
<dbReference type="EMBL" id="AB065728">
    <property type="protein sequence ID" value="BAC05949.1"/>
    <property type="status" value="ALT_INIT"/>
    <property type="molecule type" value="Genomic_DNA"/>
</dbReference>
<dbReference type="EMBL" id="AK131555">
    <property type="protein sequence ID" value="BAD18689.1"/>
    <property type="molecule type" value="mRNA"/>
</dbReference>
<dbReference type="EMBL" id="AL512324">
    <property type="status" value="NOT_ANNOTATED_CDS"/>
    <property type="molecule type" value="Genomic_DNA"/>
</dbReference>
<dbReference type="EMBL" id="CH471160">
    <property type="protein sequence ID" value="EAW86641.1"/>
    <property type="molecule type" value="Genomic_DNA"/>
</dbReference>
<dbReference type="EMBL" id="BC104853">
    <property type="protein sequence ID" value="AAI04854.1"/>
    <property type="molecule type" value="mRNA"/>
</dbReference>
<dbReference type="EMBL" id="BC104855">
    <property type="protein sequence ID" value="AAI04856.1"/>
    <property type="molecule type" value="mRNA"/>
</dbReference>
<dbReference type="EMBL" id="BC143622">
    <property type="protein sequence ID" value="AAI43623.1"/>
    <property type="molecule type" value="mRNA"/>
</dbReference>
<dbReference type="EMBL" id="BK004287">
    <property type="protein sequence ID" value="DAA04685.1"/>
    <property type="molecule type" value="Genomic_DNA"/>
</dbReference>
<dbReference type="CCDS" id="CCDS31188.1"/>
<dbReference type="RefSeq" id="NP_001004297.2">
    <property type="nucleotide sequence ID" value="NM_001004297.3"/>
</dbReference>
<dbReference type="RefSeq" id="XP_011538449.1">
    <property type="nucleotide sequence ID" value="XM_011540147.2"/>
</dbReference>
<dbReference type="RefSeq" id="XP_016872121.1">
    <property type="nucleotide sequence ID" value="XM_017016632.3"/>
</dbReference>
<dbReference type="RefSeq" id="XP_016872122.1">
    <property type="nucleotide sequence ID" value="XM_017016633.1"/>
</dbReference>
<dbReference type="RefSeq" id="XP_016872123.1">
    <property type="nucleotide sequence ID" value="XM_017016634.1"/>
</dbReference>
<dbReference type="RefSeq" id="XP_047281685.1">
    <property type="nucleotide sequence ID" value="XM_047425729.1"/>
</dbReference>
<dbReference type="RefSeq" id="XP_047281686.1">
    <property type="nucleotide sequence ID" value="XM_047425730.1"/>
</dbReference>
<dbReference type="RefSeq" id="XP_047281687.1">
    <property type="nucleotide sequence ID" value="XM_047425731.1"/>
</dbReference>
<dbReference type="RefSeq" id="XP_054185536.1">
    <property type="nucleotide sequence ID" value="XM_054329561.1"/>
</dbReference>
<dbReference type="RefSeq" id="XP_054185537.1">
    <property type="nucleotide sequence ID" value="XM_054329562.1"/>
</dbReference>
<dbReference type="RefSeq" id="XP_054185538.1">
    <property type="nucleotide sequence ID" value="XM_054329563.1"/>
</dbReference>
<dbReference type="RefSeq" id="XP_054222688.1">
    <property type="nucleotide sequence ID" value="XM_054366713.1"/>
</dbReference>
<dbReference type="RefSeq" id="XP_054222689.1">
    <property type="nucleotide sequence ID" value="XM_054366714.1"/>
</dbReference>
<dbReference type="RefSeq" id="XP_054222690.1">
    <property type="nucleotide sequence ID" value="XM_054366715.1"/>
</dbReference>
<dbReference type="RefSeq" id="XP_054222691.1">
    <property type="nucleotide sequence ID" value="XM_054366716.1"/>
</dbReference>
<dbReference type="RefSeq" id="XP_054222692.1">
    <property type="nucleotide sequence ID" value="XM_054366717.1"/>
</dbReference>
<dbReference type="SMR" id="Q8NGR1"/>
<dbReference type="BioGRID" id="122620">
    <property type="interactions" value="1"/>
</dbReference>
<dbReference type="FunCoup" id="Q8NGR1">
    <property type="interactions" value="416"/>
</dbReference>
<dbReference type="IntAct" id="Q8NGR1">
    <property type="interactions" value="1"/>
</dbReference>
<dbReference type="STRING" id="9606.ENSP00000363522"/>
<dbReference type="GlyCosmos" id="Q8NGR1">
    <property type="glycosylation" value="1 site, No reported glycans"/>
</dbReference>
<dbReference type="GlyGen" id="Q8NGR1">
    <property type="glycosylation" value="1 site"/>
</dbReference>
<dbReference type="iPTMnet" id="Q8NGR1"/>
<dbReference type="PhosphoSitePlus" id="Q8NGR1"/>
<dbReference type="BioMuta" id="OR13A1"/>
<dbReference type="DMDM" id="229462928"/>
<dbReference type="PaxDb" id="9606-ENSP00000451950"/>
<dbReference type="Antibodypedia" id="70938">
    <property type="antibodies" value="14 antibodies from 10 providers"/>
</dbReference>
<dbReference type="DNASU" id="79290"/>
<dbReference type="Ensembl" id="ENST00000374401.3">
    <property type="protein sequence ID" value="ENSP00000363522.2"/>
    <property type="gene ID" value="ENSG00000256574.8"/>
</dbReference>
<dbReference type="Ensembl" id="ENST00000536058.1">
    <property type="protein sequence ID" value="ENSP00000438657.1"/>
    <property type="gene ID" value="ENSG00000256574.8"/>
</dbReference>
<dbReference type="Ensembl" id="ENST00000553795.6">
    <property type="protein sequence ID" value="ENSP00000451950.1"/>
    <property type="gene ID" value="ENSG00000256574.8"/>
</dbReference>
<dbReference type="Ensembl" id="ENST00000612185.1">
    <property type="protein sequence ID" value="ENSP00000484353.1"/>
    <property type="gene ID" value="ENSG00000277495.4"/>
</dbReference>
<dbReference type="Ensembl" id="ENST00000615770.1">
    <property type="protein sequence ID" value="ENSP00000480319.1"/>
    <property type="gene ID" value="ENSG00000277495.4"/>
</dbReference>
<dbReference type="Ensembl" id="ENST00000616267.4">
    <property type="protein sequence ID" value="ENSP00000483252.1"/>
    <property type="gene ID" value="ENSG00000277495.4"/>
</dbReference>
<dbReference type="GeneID" id="79290"/>
<dbReference type="KEGG" id="hsa:79290"/>
<dbReference type="MANE-Select" id="ENST00000553795.6">
    <property type="protein sequence ID" value="ENSP00000451950.1"/>
    <property type="RefSeq nucleotide sequence ID" value="NM_001004297.3"/>
    <property type="RefSeq protein sequence ID" value="NP_001004297.2"/>
</dbReference>
<dbReference type="UCSC" id="uc001jcc.1">
    <property type="organism name" value="human"/>
</dbReference>
<dbReference type="AGR" id="HGNC:14772"/>
<dbReference type="CTD" id="79290"/>
<dbReference type="GeneCards" id="OR13A1"/>
<dbReference type="HGNC" id="HGNC:14772">
    <property type="gene designation" value="OR13A1"/>
</dbReference>
<dbReference type="HPA" id="ENSG00000256574">
    <property type="expression patterns" value="Not detected"/>
</dbReference>
<dbReference type="neXtProt" id="NX_Q8NGR1"/>
<dbReference type="OpenTargets" id="ENSG00000256574"/>
<dbReference type="PharmGKB" id="PA32030"/>
<dbReference type="VEuPathDB" id="HostDB:ENSG00000256574"/>
<dbReference type="eggNOG" id="ENOG502SKP5">
    <property type="taxonomic scope" value="Eukaryota"/>
</dbReference>
<dbReference type="GeneTree" id="ENSGT01130000278336"/>
<dbReference type="HOGENOM" id="CLU_012526_1_3_1"/>
<dbReference type="InParanoid" id="Q8NGR1"/>
<dbReference type="OMA" id="PRTMSNQ"/>
<dbReference type="OrthoDB" id="6145535at2759"/>
<dbReference type="PAN-GO" id="Q8NGR1">
    <property type="GO annotations" value="2 GO annotations based on evolutionary models"/>
</dbReference>
<dbReference type="PhylomeDB" id="Q8NGR1"/>
<dbReference type="TreeFam" id="TF337579"/>
<dbReference type="PathwayCommons" id="Q8NGR1"/>
<dbReference type="Reactome" id="R-HSA-9752946">
    <property type="pathway name" value="Expression and translocation of olfactory receptors"/>
</dbReference>
<dbReference type="BioGRID-ORCS" id="79290">
    <property type="hits" value="9 hits in 754 CRISPR screens"/>
</dbReference>
<dbReference type="GeneWiki" id="OR13A1"/>
<dbReference type="GenomeRNAi" id="79290"/>
<dbReference type="Pharos" id="Q8NGR1">
    <property type="development level" value="Tdark"/>
</dbReference>
<dbReference type="PRO" id="PR:Q8NGR1"/>
<dbReference type="Proteomes" id="UP000005640">
    <property type="component" value="Chromosome 10"/>
</dbReference>
<dbReference type="RNAct" id="Q8NGR1">
    <property type="molecule type" value="protein"/>
</dbReference>
<dbReference type="Bgee" id="ENSG00000256574">
    <property type="expression patterns" value="Expressed in male germ line stem cell (sensu Vertebrata) in testis and 40 other cell types or tissues"/>
</dbReference>
<dbReference type="ExpressionAtlas" id="Q8NGR1">
    <property type="expression patterns" value="baseline and differential"/>
</dbReference>
<dbReference type="GO" id="GO:0005886">
    <property type="term" value="C:plasma membrane"/>
    <property type="evidence" value="ECO:0007669"/>
    <property type="project" value="UniProtKB-SubCell"/>
</dbReference>
<dbReference type="GO" id="GO:0004930">
    <property type="term" value="F:G protein-coupled receptor activity"/>
    <property type="evidence" value="ECO:0007669"/>
    <property type="project" value="UniProtKB-KW"/>
</dbReference>
<dbReference type="GO" id="GO:0005549">
    <property type="term" value="F:odorant binding"/>
    <property type="evidence" value="ECO:0000318"/>
    <property type="project" value="GO_Central"/>
</dbReference>
<dbReference type="GO" id="GO:0004984">
    <property type="term" value="F:olfactory receptor activity"/>
    <property type="evidence" value="ECO:0000318"/>
    <property type="project" value="GO_Central"/>
</dbReference>
<dbReference type="CDD" id="cd15232">
    <property type="entry name" value="7tmA_OR13-like"/>
    <property type="match status" value="1"/>
</dbReference>
<dbReference type="FunFam" id="1.20.1070.10:FF:000015">
    <property type="entry name" value="Olfactory receptor"/>
    <property type="match status" value="1"/>
</dbReference>
<dbReference type="Gene3D" id="1.20.1070.10">
    <property type="entry name" value="Rhodopsin 7-helix transmembrane proteins"/>
    <property type="match status" value="1"/>
</dbReference>
<dbReference type="InterPro" id="IPR000276">
    <property type="entry name" value="GPCR_Rhodpsn"/>
</dbReference>
<dbReference type="InterPro" id="IPR017452">
    <property type="entry name" value="GPCR_Rhodpsn_7TM"/>
</dbReference>
<dbReference type="InterPro" id="IPR000725">
    <property type="entry name" value="Olfact_rcpt"/>
</dbReference>
<dbReference type="InterPro" id="IPR050516">
    <property type="entry name" value="Olfactory_GPCR"/>
</dbReference>
<dbReference type="PANTHER" id="PTHR26452">
    <property type="entry name" value="OLFACTORY RECEPTOR"/>
    <property type="match status" value="1"/>
</dbReference>
<dbReference type="Pfam" id="PF13853">
    <property type="entry name" value="7tm_4"/>
    <property type="match status" value="1"/>
</dbReference>
<dbReference type="PRINTS" id="PR00237">
    <property type="entry name" value="GPCRRHODOPSN"/>
</dbReference>
<dbReference type="PRINTS" id="PR00245">
    <property type="entry name" value="OLFACTORYR"/>
</dbReference>
<dbReference type="SUPFAM" id="SSF81321">
    <property type="entry name" value="Family A G protein-coupled receptor-like"/>
    <property type="match status" value="1"/>
</dbReference>
<dbReference type="PROSITE" id="PS00237">
    <property type="entry name" value="G_PROTEIN_RECEP_F1_1"/>
    <property type="match status" value="1"/>
</dbReference>
<dbReference type="PROSITE" id="PS50262">
    <property type="entry name" value="G_PROTEIN_RECEP_F1_2"/>
    <property type="match status" value="1"/>
</dbReference>
<protein>
    <recommendedName>
        <fullName>Olfactory receptor 13A1</fullName>
    </recommendedName>
    <alternativeName>
        <fullName>Olfactory receptor OR10-3</fullName>
    </alternativeName>
</protein>
<keyword id="KW-1003">Cell membrane</keyword>
<keyword id="KW-1015">Disulfide bond</keyword>
<keyword id="KW-0297">G-protein coupled receptor</keyword>
<keyword id="KW-0325">Glycoprotein</keyword>
<keyword id="KW-0472">Membrane</keyword>
<keyword id="KW-0552">Olfaction</keyword>
<keyword id="KW-0675">Receptor</keyword>
<keyword id="KW-1185">Reference proteome</keyword>
<keyword id="KW-0716">Sensory transduction</keyword>
<keyword id="KW-0807">Transducer</keyword>
<keyword id="KW-0812">Transmembrane</keyword>
<keyword id="KW-1133">Transmembrane helix</keyword>
<sequence>MKLWMESHLIVPETRPSPRMMSNQTLVTEFILQGFSEHPEYRVFLFSCFLFLYSGALTGNVLITLAITFNPGLHAPMYFFLLNLATMDIICTSSIMPKALASLVSEESSISYGGCMAQLYFLTWAASSELLLLTVMAYDRYAAICHPLHYSSMMSKVFCSGLATAVWLLCAVNTAIHTGLMLRLDFCGPNVIIHFFCEVPPLLLLSCSSTYVNGVMIVLADAFYGIVNFLMTIASYGFIVSSILKVKTAWGRQKAFSTCSSHLTVVCMYYTAVFYAYISPVSGYSAGKSKLAGLLYTVLSPTLNPLIYTLRNKEVKAALRKLFPFFRN</sequence>
<evidence type="ECO:0000255" key="1"/>
<evidence type="ECO:0000255" key="2">
    <source>
        <dbReference type="PROSITE-ProRule" id="PRU00521"/>
    </source>
</evidence>
<evidence type="ECO:0000305" key="3"/>
<accession>Q8NGR1</accession>
<accession>Q2M3M4</accession>
<accession>Q5VV57</accession>
<accession>Q6IFH5</accession>
<accession>Q6ZMN6</accession>
<comment type="function">
    <text evidence="3">Odorant receptor.</text>
</comment>
<comment type="subcellular location">
    <subcellularLocation>
        <location>Cell membrane</location>
        <topology>Multi-pass membrane protein</topology>
    </subcellularLocation>
</comment>
<comment type="similarity">
    <text evidence="2">Belongs to the G-protein coupled receptor 1 family.</text>
</comment>
<comment type="caution">
    <text evidence="3">It is uncertain whether Met-1 or Met-20 is the initiator.</text>
</comment>
<comment type="sequence caution" evidence="3">
    <conflict type="erroneous initiation">
        <sequence resource="EMBL-CDS" id="BAC05949"/>
    </conflict>
</comment>
<comment type="online information" name="Human Olfactory Receptor Data Exploratorium (HORDE)">
    <link uri="http://genome.weizmann.ac.il/horde/card/index/symbol:OR13A1"/>
</comment>
<feature type="chain" id="PRO_0000150730" description="Olfactory receptor 13A1">
    <location>
        <begin position="1"/>
        <end position="328"/>
    </location>
</feature>
<feature type="topological domain" description="Extracellular" evidence="1">
    <location>
        <begin position="1"/>
        <end position="43"/>
    </location>
</feature>
<feature type="transmembrane region" description="Helical; Name=1" evidence="1">
    <location>
        <begin position="44"/>
        <end position="64"/>
    </location>
</feature>
<feature type="topological domain" description="Cytoplasmic" evidence="1">
    <location>
        <begin position="65"/>
        <end position="72"/>
    </location>
</feature>
<feature type="transmembrane region" description="Helical; Name=2" evidence="1">
    <location>
        <begin position="73"/>
        <end position="93"/>
    </location>
</feature>
<feature type="topological domain" description="Extracellular" evidence="1">
    <location>
        <begin position="94"/>
        <end position="117"/>
    </location>
</feature>
<feature type="transmembrane region" description="Helical; Name=3" evidence="1">
    <location>
        <begin position="118"/>
        <end position="138"/>
    </location>
</feature>
<feature type="topological domain" description="Cytoplasmic" evidence="1">
    <location>
        <begin position="139"/>
        <end position="157"/>
    </location>
</feature>
<feature type="transmembrane region" description="Helical; Name=4" evidence="1">
    <location>
        <begin position="158"/>
        <end position="178"/>
    </location>
</feature>
<feature type="topological domain" description="Extracellular" evidence="1">
    <location>
        <begin position="179"/>
        <end position="215"/>
    </location>
</feature>
<feature type="transmembrane region" description="Helical; Name=5" evidence="1">
    <location>
        <begin position="216"/>
        <end position="235"/>
    </location>
</feature>
<feature type="topological domain" description="Cytoplasmic" evidence="1">
    <location>
        <begin position="236"/>
        <end position="255"/>
    </location>
</feature>
<feature type="transmembrane region" description="Helical; Name=6" evidence="1">
    <location>
        <begin position="256"/>
        <end position="276"/>
    </location>
</feature>
<feature type="topological domain" description="Extracellular" evidence="1">
    <location>
        <begin position="277"/>
        <end position="289"/>
    </location>
</feature>
<feature type="transmembrane region" description="Helical; Name=7" evidence="1">
    <location>
        <begin position="290"/>
        <end position="310"/>
    </location>
</feature>
<feature type="topological domain" description="Cytoplasmic" evidence="1">
    <location>
        <begin position="311"/>
        <end position="328"/>
    </location>
</feature>
<feature type="glycosylation site" description="N-linked (GlcNAc...) asparagine" evidence="1">
    <location>
        <position position="23"/>
    </location>
</feature>
<feature type="disulfide bond" evidence="2">
    <location>
        <begin position="115"/>
        <end position="207"/>
    </location>
</feature>
<proteinExistence type="evidence at transcript level"/>